<reference key="1">
    <citation type="journal article" date="2003" name="Mycol. Res.">
        <title>Efficient isolation of genes differentially expressed on cellulose by suppression subtractive hybridization in Agaricus bisporus.</title>
        <authorList>
            <person name="Morales-Almora P."/>
            <person name="Thurston C.F."/>
        </authorList>
    </citation>
    <scope>NUCLEOTIDE SEQUENCE [MRNA]</scope>
    <source>
        <strain>D649</strain>
    </source>
</reference>
<evidence type="ECO:0000250" key="1"/>
<evidence type="ECO:0000256" key="2">
    <source>
        <dbReference type="SAM" id="MobiDB-lite"/>
    </source>
</evidence>
<evidence type="ECO:0000305" key="3"/>
<sequence length="139" mass="14734">MSGKGKAGKSGGKAGSETKSMSRSSKAGLQFPVGRVHRLLKKGNYAQRVGAGAPVYMAAVLEYLAAEILELAGNAARDNKKQRIVPRHLQLAIRNDEELHKLLGNVVISQGGVVPHIAPELLPSKSSKGKKDEGVSQEL</sequence>
<organism>
    <name type="scientific">Agaricus bisporus</name>
    <name type="common">White button mushroom</name>
    <dbReference type="NCBI Taxonomy" id="5341"/>
    <lineage>
        <taxon>Eukaryota</taxon>
        <taxon>Fungi</taxon>
        <taxon>Dikarya</taxon>
        <taxon>Basidiomycota</taxon>
        <taxon>Agaricomycotina</taxon>
        <taxon>Agaricomycetes</taxon>
        <taxon>Agaricomycetidae</taxon>
        <taxon>Agaricales</taxon>
        <taxon>Agaricineae</taxon>
        <taxon>Agaricaceae</taxon>
        <taxon>Agaricus</taxon>
    </lineage>
</organism>
<feature type="initiator methionine" description="Removed" evidence="1">
    <location>
        <position position="1"/>
    </location>
</feature>
<feature type="chain" id="PRO_0000055196" description="Histone H2A">
    <location>
        <begin position="2"/>
        <end position="139"/>
    </location>
</feature>
<feature type="region of interest" description="Disordered" evidence="2">
    <location>
        <begin position="1"/>
        <end position="27"/>
    </location>
</feature>
<feature type="region of interest" description="Disordered" evidence="2">
    <location>
        <begin position="119"/>
        <end position="139"/>
    </location>
</feature>
<feature type="short sequence motif" description="[ST]-Q motif">
    <location>
        <begin position="136"/>
        <end position="137"/>
    </location>
</feature>
<feature type="compositionally biased region" description="Polar residues" evidence="2">
    <location>
        <begin position="17"/>
        <end position="27"/>
    </location>
</feature>
<feature type="compositionally biased region" description="Basic and acidic residues" evidence="2">
    <location>
        <begin position="129"/>
        <end position="139"/>
    </location>
</feature>
<feature type="modified residue" description="N-acetylserine" evidence="1">
    <location>
        <position position="2"/>
    </location>
</feature>
<feature type="modified residue" description="N6-acetyllysine" evidence="1">
    <location>
        <position position="9"/>
    </location>
</feature>
<feature type="modified residue" description="N6-acetyllysine" evidence="1">
    <location>
        <position position="13"/>
    </location>
</feature>
<feature type="modified residue" description="N5-methylglutamine" evidence="1">
    <location>
        <position position="110"/>
    </location>
</feature>
<feature type="modified residue" description="Phosphoserine" evidence="1">
    <location>
        <position position="136"/>
    </location>
</feature>
<proteinExistence type="evidence at transcript level"/>
<dbReference type="EMBL" id="AJ293758">
    <property type="protein sequence ID" value="CAC03460.1"/>
    <property type="molecule type" value="mRNA"/>
</dbReference>
<dbReference type="SMR" id="Q9HGX4"/>
<dbReference type="OMA" id="THHEYAK"/>
<dbReference type="GO" id="GO:0000786">
    <property type="term" value="C:nucleosome"/>
    <property type="evidence" value="ECO:0007669"/>
    <property type="project" value="UniProtKB-KW"/>
</dbReference>
<dbReference type="GO" id="GO:0005634">
    <property type="term" value="C:nucleus"/>
    <property type="evidence" value="ECO:0007669"/>
    <property type="project" value="UniProtKB-SubCell"/>
</dbReference>
<dbReference type="GO" id="GO:0003677">
    <property type="term" value="F:DNA binding"/>
    <property type="evidence" value="ECO:0007669"/>
    <property type="project" value="UniProtKB-KW"/>
</dbReference>
<dbReference type="GO" id="GO:0046982">
    <property type="term" value="F:protein heterodimerization activity"/>
    <property type="evidence" value="ECO:0007669"/>
    <property type="project" value="InterPro"/>
</dbReference>
<dbReference type="GO" id="GO:0030527">
    <property type="term" value="F:structural constituent of chromatin"/>
    <property type="evidence" value="ECO:0007669"/>
    <property type="project" value="InterPro"/>
</dbReference>
<dbReference type="GO" id="GO:0006281">
    <property type="term" value="P:DNA repair"/>
    <property type="evidence" value="ECO:0007669"/>
    <property type="project" value="UniProtKB-KW"/>
</dbReference>
<dbReference type="CDD" id="cd00074">
    <property type="entry name" value="HFD_H2A"/>
    <property type="match status" value="1"/>
</dbReference>
<dbReference type="FunFam" id="1.10.20.10:FF:000008">
    <property type="entry name" value="Histone H2A"/>
    <property type="match status" value="1"/>
</dbReference>
<dbReference type="Gene3D" id="1.10.20.10">
    <property type="entry name" value="Histone, subunit A"/>
    <property type="match status" value="1"/>
</dbReference>
<dbReference type="InterPro" id="IPR009072">
    <property type="entry name" value="Histone-fold"/>
</dbReference>
<dbReference type="InterPro" id="IPR002119">
    <property type="entry name" value="Histone_H2A"/>
</dbReference>
<dbReference type="InterPro" id="IPR007125">
    <property type="entry name" value="Histone_H2A/H2B/H3"/>
</dbReference>
<dbReference type="InterPro" id="IPR032454">
    <property type="entry name" value="Histone_H2A_C"/>
</dbReference>
<dbReference type="InterPro" id="IPR032458">
    <property type="entry name" value="Histone_H2A_CS"/>
</dbReference>
<dbReference type="PANTHER" id="PTHR23430">
    <property type="entry name" value="HISTONE H2A"/>
    <property type="match status" value="1"/>
</dbReference>
<dbReference type="Pfam" id="PF00125">
    <property type="entry name" value="Histone"/>
    <property type="match status" value="1"/>
</dbReference>
<dbReference type="Pfam" id="PF16211">
    <property type="entry name" value="Histone_H2A_C"/>
    <property type="match status" value="1"/>
</dbReference>
<dbReference type="PRINTS" id="PR00620">
    <property type="entry name" value="HISTONEH2A"/>
</dbReference>
<dbReference type="SMART" id="SM00414">
    <property type="entry name" value="H2A"/>
    <property type="match status" value="1"/>
</dbReference>
<dbReference type="SUPFAM" id="SSF47113">
    <property type="entry name" value="Histone-fold"/>
    <property type="match status" value="1"/>
</dbReference>
<dbReference type="PROSITE" id="PS00046">
    <property type="entry name" value="HISTONE_H2A"/>
    <property type="match status" value="1"/>
</dbReference>
<keyword id="KW-0007">Acetylation</keyword>
<keyword id="KW-0158">Chromosome</keyword>
<keyword id="KW-0227">DNA damage</keyword>
<keyword id="KW-0234">DNA repair</keyword>
<keyword id="KW-0238">DNA-binding</keyword>
<keyword id="KW-0488">Methylation</keyword>
<keyword id="KW-0544">Nucleosome core</keyword>
<keyword id="KW-0539">Nucleus</keyword>
<keyword id="KW-0597">Phosphoprotein</keyword>
<accession>Q9HGX4</accession>
<name>H2A_AGABI</name>
<comment type="function">
    <text>Core component of nucleosome which plays a central role in DNA double strand break (DSB) repair. Nucleosomes wrap and compact DNA into chromatin, limiting DNA accessibility to the cellular machineries which require DNA as a template. Histones thereby play a central role in transcription regulation, DNA repair, DNA replication and chromosomal stability. DNA accessibility is regulated via a complex set of post-translational modifications of histones, also called histone code, and nucleosome remodeling.</text>
</comment>
<comment type="subunit">
    <text>The nucleosome is a histone octamer containing two molecules each of H2A, H2B, H3 and H4 assembled in one H3-H4 heterotetramer and two H2A-H2B heterodimers. The octamer wraps approximately 147 bp of DNA.</text>
</comment>
<comment type="subcellular location">
    <subcellularLocation>
        <location>Nucleus</location>
    </subcellularLocation>
    <subcellularLocation>
        <location>Chromosome</location>
    </subcellularLocation>
</comment>
<comment type="domain">
    <text>The [ST]-Q motif constitutes a recognition sequence for kinases from the PI3/PI4-kinase family.</text>
</comment>
<comment type="PTM">
    <text evidence="1">Phosphorylated to form H2AS128ph (gamma-H2A) in response to DNA double-strand breaks (DSBs) generated by exogenous genotoxic agents and by stalled replication forks. Phosphorylation is dependent on the DNA damage checkpoint kinases MEC1/ATR and TEL1/ATM, spreads on either side of a detected DSB site and may mark the surrounding chromatin for recruitment of proteins required for DNA damage signaling and repair. Gamma-H2A is removed from the DNA prior to the strand invasion-primer extension step of the repair process and subsequently dephosphorylated. Dephosphorylation is necessary for efficient recovery from the DNA damage checkpoint (By similarity).</text>
</comment>
<comment type="PTM">
    <text evidence="1">Acetylated by ESA1 to form H2AK4ac and H2AK7ac.</text>
</comment>
<comment type="miscellaneous">
    <text evidence="3">In contrast to vertebrates and insects, its C-terminus is not monoubiquitinated.</text>
</comment>
<comment type="similarity">
    <text evidence="3">Belongs to the histone H2A family.</text>
</comment>
<comment type="caution">
    <text evidence="3">To ensure consistency between histone entries, we follow the 'Brno' nomenclature for histone modifications, with positions referring to those used in the literature for the 'closest' model organism. Due to slight variations in histone sequences between organisms and to the presence of initiator methionine in UniProtKB/Swiss-Prot sequences, the actual positions of modified amino acids in the sequence generally differ. In this entry the following conventions are used: H2AK4ac = acetylated Lys-9; H2AK7ac = acetylated Lys-13; H2AS128ph = phosphorylated Ser-136.</text>
</comment>
<protein>
    <recommendedName>
        <fullName>Histone H2A</fullName>
    </recommendedName>
</protein>